<protein>
    <recommendedName>
        <fullName>Rab3 GTPase-activating protein catalytic subunit</fullName>
    </recommendedName>
    <alternativeName>
        <fullName>RAB3 GTPase-activating protein 130 kDa subunit</fullName>
    </alternativeName>
    <alternativeName>
        <fullName>Rab3-GAP p130</fullName>
        <shortName>Rab3-GAP</shortName>
    </alternativeName>
</protein>
<evidence type="ECO:0000250" key="1">
    <source>
        <dbReference type="UniProtKB" id="P69735"/>
    </source>
</evidence>
<evidence type="ECO:0000250" key="2">
    <source>
        <dbReference type="UniProtKB" id="Q80UJ7"/>
    </source>
</evidence>
<evidence type="ECO:0000256" key="3">
    <source>
        <dbReference type="SAM" id="MobiDB-lite"/>
    </source>
</evidence>
<evidence type="ECO:0000269" key="4">
    <source>
    </source>
</evidence>
<evidence type="ECO:0000269" key="5">
    <source>
    </source>
</evidence>
<evidence type="ECO:0000269" key="6">
    <source>
    </source>
</evidence>
<evidence type="ECO:0000269" key="7">
    <source>
    </source>
</evidence>
<evidence type="ECO:0000269" key="8">
    <source>
    </source>
</evidence>
<evidence type="ECO:0000269" key="9">
    <source>
    </source>
</evidence>
<evidence type="ECO:0000269" key="10">
    <source>
    </source>
</evidence>
<evidence type="ECO:0000269" key="11">
    <source>
    </source>
</evidence>
<evidence type="ECO:0000269" key="12">
    <source>
    </source>
</evidence>
<evidence type="ECO:0000269" key="13">
    <source>
    </source>
</evidence>
<evidence type="ECO:0000303" key="14">
    <source>
    </source>
</evidence>
<evidence type="ECO:0000305" key="15"/>
<evidence type="ECO:0000312" key="16">
    <source>
        <dbReference type="HGNC" id="HGNC:17063"/>
    </source>
</evidence>
<evidence type="ECO:0007744" key="17">
    <source>
    </source>
</evidence>
<evidence type="ECO:0007744" key="18">
    <source>
    </source>
</evidence>
<accession>Q15042</accession>
<accession>A6H8Z3</accession>
<accession>C9J837</accession>
<accession>Q659F5</accession>
<accession>Q8TBB4</accession>
<feature type="chain" id="PRO_0000191655" description="Rab3 GTPase-activating protein catalytic subunit">
    <location>
        <begin position="1"/>
        <end position="981"/>
    </location>
</feature>
<feature type="region of interest" description="Disordered" evidence="3">
    <location>
        <begin position="592"/>
        <end position="613"/>
    </location>
</feature>
<feature type="region of interest" description="Disordered" evidence="3">
    <location>
        <begin position="908"/>
        <end position="937"/>
    </location>
</feature>
<feature type="compositionally biased region" description="Basic and acidic residues" evidence="3">
    <location>
        <begin position="912"/>
        <end position="925"/>
    </location>
</feature>
<feature type="modified residue" description="Phosphoserine" evidence="2">
    <location>
        <position position="83"/>
    </location>
</feature>
<feature type="modified residue" description="Phosphoserine" evidence="17">
    <location>
        <position position="379"/>
    </location>
</feature>
<feature type="modified residue" description="Phosphoserine" evidence="17">
    <location>
        <position position="537"/>
    </location>
</feature>
<feature type="modified residue" description="Phosphoserine" evidence="2">
    <location>
        <position position="579"/>
    </location>
</feature>
<feature type="modified residue" description="Phosphoserine" evidence="2">
    <location>
        <position position="581"/>
    </location>
</feature>
<feature type="modified residue" description="Phosphoserine" evidence="18">
    <location>
        <position position="590"/>
    </location>
</feature>
<feature type="modified residue" description="Phosphoserine" evidence="17">
    <location>
        <position position="664"/>
    </location>
</feature>
<feature type="modified residue" description="Phosphothreonine" evidence="17">
    <location>
        <position position="908"/>
    </location>
</feature>
<feature type="splice variant" id="VSP_054475" description="In isoform 3." evidence="14">
    <original>MAADSEPESEVFEITDFTTASEWERFISKVEEVLNDWKLIGNSLGKPLEK</original>
    <variation>MFSLIS</variation>
    <location>
        <begin position="1"/>
        <end position="50"/>
    </location>
</feature>
<feature type="splice variant" id="VSP_054068" description="In isoform 2." evidence="14">
    <original>R</original>
    <variation>RLTESSDE</variation>
    <location>
        <position position="903"/>
    </location>
</feature>
<feature type="splice variant" id="VSP_054476" description="In isoform 3." evidence="14">
    <original>GAFSSDTSFF</original>
    <variation>VKIIDGDV</variation>
    <location>
        <begin position="972"/>
        <end position="981"/>
    </location>
</feature>
<feature type="sequence variant" id="VAR_086019" description="In WARBM1; abolishes GEF activity towards RAB18; loss of RAB18 membrane association; no effect on GAP activity; no effect on GAP activity towards the RAB3 proteins RAB5A or RAB43; dbSNP:rs587777154." evidence="8 9">
    <original>T</original>
    <variation>P</variation>
    <location>
        <position position="18"/>
    </location>
</feature>
<feature type="sequence variant" id="VAR_086020" description="In WARBM1; abolishes GEF activity towards RAB18; loss of RAB18 membrane association; no effect on GAP activity; no effect on GAP activity towards the RAB3 proteins RAB5A or RAB43; dbSNP:rs587777155." evidence="8 9">
    <original>E</original>
    <variation>V</variation>
    <location>
        <position position="24"/>
    </location>
</feature>
<feature type="sequence variant" id="VAR_051716" description="In dbSNP:rs10445686." evidence="5">
    <original>N</original>
    <variation>S</variation>
    <location>
        <position position="598"/>
    </location>
</feature>
<feature type="mutagenesis site" description="No effect." evidence="4">
    <original>R</original>
    <variation>A</variation>
    <location>
        <position position="619"/>
    </location>
</feature>
<feature type="mutagenesis site" description="No effect." evidence="4">
    <original>R</original>
    <variation>A</variation>
    <location>
        <position position="700"/>
    </location>
</feature>
<feature type="mutagenesis site" description="Loss of function." evidence="4">
    <original>R</original>
    <variation>A</variation>
    <location>
        <position position="728"/>
    </location>
</feature>
<feature type="mutagenesis site" description="No effect." evidence="4">
    <original>R</original>
    <variation>A</variation>
    <location>
        <position position="753"/>
    </location>
</feature>
<proteinExistence type="evidence at protein level"/>
<reference key="1">
    <citation type="journal article" date="1994" name="DNA Res.">
        <title>Prediction of the coding sequences of unidentified human genes. II. The coding sequences of 40 new genes (KIAA0041-KIAA0080) deduced by analysis of cDNA clones from human cell line KG-1.</title>
        <authorList>
            <person name="Nomura N."/>
            <person name="Nagase T."/>
            <person name="Miyajima N."/>
            <person name="Sazuka T."/>
            <person name="Tanaka A."/>
            <person name="Sato S."/>
            <person name="Seki N."/>
            <person name="Kawarabayasi Y."/>
            <person name="Ishikawa K."/>
            <person name="Tabata S."/>
        </authorList>
    </citation>
    <scope>NUCLEOTIDE SEQUENCE [LARGE SCALE MRNA] (ISOFORM 1)</scope>
    <source>
        <tissue>Bone marrow</tissue>
    </source>
</reference>
<reference key="2">
    <citation type="journal article" date="2005" name="Nature">
        <title>Generation and annotation of the DNA sequences of human chromosomes 2 and 4.</title>
        <authorList>
            <person name="Hillier L.W."/>
            <person name="Graves T.A."/>
            <person name="Fulton R.S."/>
            <person name="Fulton L.A."/>
            <person name="Pepin K.H."/>
            <person name="Minx P."/>
            <person name="Wagner-McPherson C."/>
            <person name="Layman D."/>
            <person name="Wylie K."/>
            <person name="Sekhon M."/>
            <person name="Becker M.C."/>
            <person name="Fewell G.A."/>
            <person name="Delehaunty K.D."/>
            <person name="Miner T.L."/>
            <person name="Nash W.E."/>
            <person name="Kremitzki C."/>
            <person name="Oddy L."/>
            <person name="Du H."/>
            <person name="Sun H."/>
            <person name="Bradshaw-Cordum H."/>
            <person name="Ali J."/>
            <person name="Carter J."/>
            <person name="Cordes M."/>
            <person name="Harris A."/>
            <person name="Isak A."/>
            <person name="van Brunt A."/>
            <person name="Nguyen C."/>
            <person name="Du F."/>
            <person name="Courtney L."/>
            <person name="Kalicki J."/>
            <person name="Ozersky P."/>
            <person name="Abbott S."/>
            <person name="Armstrong J."/>
            <person name="Belter E.A."/>
            <person name="Caruso L."/>
            <person name="Cedroni M."/>
            <person name="Cotton M."/>
            <person name="Davidson T."/>
            <person name="Desai A."/>
            <person name="Elliott G."/>
            <person name="Erb T."/>
            <person name="Fronick C."/>
            <person name="Gaige T."/>
            <person name="Haakenson W."/>
            <person name="Haglund K."/>
            <person name="Holmes A."/>
            <person name="Harkins R."/>
            <person name="Kim K."/>
            <person name="Kruchowski S.S."/>
            <person name="Strong C.M."/>
            <person name="Grewal N."/>
            <person name="Goyea E."/>
            <person name="Hou S."/>
            <person name="Levy A."/>
            <person name="Martinka S."/>
            <person name="Mead K."/>
            <person name="McLellan M.D."/>
            <person name="Meyer R."/>
            <person name="Randall-Maher J."/>
            <person name="Tomlinson C."/>
            <person name="Dauphin-Kohlberg S."/>
            <person name="Kozlowicz-Reilly A."/>
            <person name="Shah N."/>
            <person name="Swearengen-Shahid S."/>
            <person name="Snider J."/>
            <person name="Strong J.T."/>
            <person name="Thompson J."/>
            <person name="Yoakum M."/>
            <person name="Leonard S."/>
            <person name="Pearman C."/>
            <person name="Trani L."/>
            <person name="Radionenko M."/>
            <person name="Waligorski J.E."/>
            <person name="Wang C."/>
            <person name="Rock S.M."/>
            <person name="Tin-Wollam A.-M."/>
            <person name="Maupin R."/>
            <person name="Latreille P."/>
            <person name="Wendl M.C."/>
            <person name="Yang S.-P."/>
            <person name="Pohl C."/>
            <person name="Wallis J.W."/>
            <person name="Spieth J."/>
            <person name="Bieri T.A."/>
            <person name="Berkowicz N."/>
            <person name="Nelson J.O."/>
            <person name="Osborne J."/>
            <person name="Ding L."/>
            <person name="Meyer R."/>
            <person name="Sabo A."/>
            <person name="Shotland Y."/>
            <person name="Sinha P."/>
            <person name="Wohldmann P.E."/>
            <person name="Cook L.L."/>
            <person name="Hickenbotham M.T."/>
            <person name="Eldred J."/>
            <person name="Williams D."/>
            <person name="Jones T.A."/>
            <person name="She X."/>
            <person name="Ciccarelli F.D."/>
            <person name="Izaurralde E."/>
            <person name="Taylor J."/>
            <person name="Schmutz J."/>
            <person name="Myers R.M."/>
            <person name="Cox D.R."/>
            <person name="Huang X."/>
            <person name="McPherson J.D."/>
            <person name="Mardis E.R."/>
            <person name="Clifton S.W."/>
            <person name="Warren W.C."/>
            <person name="Chinwalla A.T."/>
            <person name="Eddy S.R."/>
            <person name="Marra M.A."/>
            <person name="Ovcharenko I."/>
            <person name="Furey T.S."/>
            <person name="Miller W."/>
            <person name="Eichler E.E."/>
            <person name="Bork P."/>
            <person name="Suyama M."/>
            <person name="Torrents D."/>
            <person name="Waterston R.H."/>
            <person name="Wilson R.K."/>
        </authorList>
    </citation>
    <scope>NUCLEOTIDE SEQUENCE [LARGE SCALE GENOMIC DNA]</scope>
</reference>
<reference key="3">
    <citation type="journal article" date="2004" name="Genome Res.">
        <title>The status, quality, and expansion of the NIH full-length cDNA project: the Mammalian Gene Collection (MGC).</title>
        <authorList>
            <consortium name="The MGC Project Team"/>
        </authorList>
    </citation>
    <scope>NUCLEOTIDE SEQUENCE [LARGE SCALE MRNA] (ISOFORMS 2 AND 3)</scope>
    <scope>NUCLEOTIDE SEQUENCE [LARGE SCALE MRNA] OF 439-981 (ISOFORM 1)</scope>
    <scope>VARIANT SER-598</scope>
    <source>
        <tissue>Placenta</tissue>
    </source>
</reference>
<reference key="4">
    <citation type="journal article" date="2007" name="BMC Genomics">
        <title>The full-ORF clone resource of the German cDNA consortium.</title>
        <authorList>
            <person name="Bechtel S."/>
            <person name="Rosenfelder H."/>
            <person name="Duda A."/>
            <person name="Schmidt C.P."/>
            <person name="Ernst U."/>
            <person name="Wellenreuther R."/>
            <person name="Mehrle A."/>
            <person name="Schuster C."/>
            <person name="Bahr A."/>
            <person name="Bloecker H."/>
            <person name="Heubner D."/>
            <person name="Hoerlein A."/>
            <person name="Michel G."/>
            <person name="Wedler H."/>
            <person name="Koehrer K."/>
            <person name="Ottenwaelder B."/>
            <person name="Poustka A."/>
            <person name="Wiemann S."/>
            <person name="Schupp I."/>
        </authorList>
    </citation>
    <scope>NUCLEOTIDE SEQUENCE [LARGE SCALE MRNA] OF 764-981</scope>
    <source>
        <tissue>Testis</tissue>
    </source>
</reference>
<reference key="5">
    <citation type="journal article" date="1997" name="J. Biol. Chem.">
        <title>Isolation and characterization of a GTPase activating protein specific for the Rab3 subfamily of small G proteins.</title>
        <authorList>
            <person name="Fukui K."/>
            <person name="Sasaki T."/>
            <person name="Imazumi K."/>
            <person name="Matsuura Y."/>
            <person name="Nakanishi H."/>
            <person name="Takai Y."/>
        </authorList>
    </citation>
    <scope>FUNCTION</scope>
    <scope>TISSUE SPECIFICITY</scope>
</reference>
<reference key="6">
    <citation type="journal article" date="1998" name="J. Biol. Chem.">
        <title>Localization of the Rab3 small G protein regulators in nerve terminals and their involvement in Ca2+-dependent exocytosis.</title>
        <authorList>
            <person name="Oishi H."/>
            <person name="Sasaki T."/>
            <person name="Nagano F."/>
            <person name="Ikeda W."/>
            <person name="Ohya T."/>
            <person name="Wada M."/>
            <person name="Ide N."/>
            <person name="Nakanishi H."/>
            <person name="Takai Y."/>
        </authorList>
    </citation>
    <scope>FUNCTION</scope>
    <scope>SUBCELLULAR LOCATION</scope>
</reference>
<reference key="7">
    <citation type="journal article" date="2000" name="J. Biol. Chem.">
        <title>Biochemical characterization of Rab3-GTPase-activating protein reveals a mechanism similar to that of Ras-GAP.</title>
        <authorList>
            <person name="Clabecq A."/>
            <person name="Henry J.-P."/>
            <person name="Darchen F."/>
        </authorList>
    </citation>
    <scope>FUNCTION</scope>
    <scope>BIOPHYSICOCHEMICAL PROPERTIES</scope>
    <scope>MUTAGENESIS OF ARG-619; ARG-700; ARG-728 AND ARG-753</scope>
</reference>
<reference key="8">
    <citation type="journal article" date="2005" name="Nat. Genet.">
        <title>Mutations of the catalytic subunit of RAB3GAP cause Warburg Micro syndrome.</title>
        <authorList>
            <person name="Aligianis I.A."/>
            <person name="Johnson C.A."/>
            <person name="Gissen P."/>
            <person name="Chen D."/>
            <person name="Hampshire D."/>
            <person name="Hoffmann K."/>
            <person name="Maina E.N."/>
            <person name="Morgan N.V."/>
            <person name="Tee L."/>
            <person name="Morton J."/>
            <person name="Ainsworth J.R."/>
            <person name="Horn D."/>
            <person name="Rosser E."/>
            <person name="Cole T.R.P."/>
            <person name="Stolte-Dijkstra I."/>
            <person name="Fieggen K."/>
            <person name="Clayton-Smith J."/>
            <person name="Megarbane A."/>
            <person name="Shield J.P."/>
            <person name="Newbury-Ecob R."/>
            <person name="Dobyns W.B."/>
            <person name="Graham J.M."/>
            <person name="Kjaer K.W."/>
            <person name="Warburg M."/>
            <person name="Bond J."/>
            <person name="Trembath R.C."/>
            <person name="Harris L.W."/>
            <person name="Takai Y."/>
            <person name="Mundlos S."/>
            <person name="Tannahill D."/>
            <person name="Woods C.G."/>
            <person name="Maher E.R."/>
        </authorList>
    </citation>
    <scope>INVOLVEMENT IN WARBM1</scope>
    <scope>FUNCTION</scope>
</reference>
<reference key="9">
    <citation type="journal article" date="2006" name="Cell">
        <title>Global, in vivo, and site-specific phosphorylation dynamics in signaling networks.</title>
        <authorList>
            <person name="Olsen J.V."/>
            <person name="Blagoev B."/>
            <person name="Gnad F."/>
            <person name="Macek B."/>
            <person name="Kumar C."/>
            <person name="Mortensen P."/>
            <person name="Mann M."/>
        </authorList>
    </citation>
    <scope>IDENTIFICATION BY MASS SPECTROMETRY [LARGE SCALE ANALYSIS]</scope>
    <source>
        <tissue>Cervix carcinoma</tissue>
    </source>
</reference>
<reference key="10">
    <citation type="journal article" date="2008" name="Proc. Natl. Acad. Sci. U.S.A.">
        <title>A quantitative atlas of mitotic phosphorylation.</title>
        <authorList>
            <person name="Dephoure N."/>
            <person name="Zhou C."/>
            <person name="Villen J."/>
            <person name="Beausoleil S.A."/>
            <person name="Bakalarski C.E."/>
            <person name="Elledge S.J."/>
            <person name="Gygi S.P."/>
        </authorList>
    </citation>
    <scope>IDENTIFICATION BY MASS SPECTROMETRY [LARGE SCALE ANALYSIS]</scope>
    <source>
        <tissue>Cervix carcinoma</tissue>
    </source>
</reference>
<reference key="11">
    <citation type="journal article" date="2009" name="Sci. Signal.">
        <title>Quantitative phosphoproteomic analysis of T cell receptor signaling reveals system-wide modulation of protein-protein interactions.</title>
        <authorList>
            <person name="Mayya V."/>
            <person name="Lundgren D.H."/>
            <person name="Hwang S.-I."/>
            <person name="Rezaul K."/>
            <person name="Wu L."/>
            <person name="Eng J.K."/>
            <person name="Rodionov V."/>
            <person name="Han D.K."/>
        </authorList>
    </citation>
    <scope>IDENTIFICATION BY MASS SPECTROMETRY [LARGE SCALE ANALYSIS]</scope>
    <source>
        <tissue>Leukemic T-cell</tissue>
    </source>
</reference>
<reference key="12">
    <citation type="journal article" date="2010" name="Sci. Signal.">
        <title>Quantitative phosphoproteomics reveals widespread full phosphorylation site occupancy during mitosis.</title>
        <authorList>
            <person name="Olsen J.V."/>
            <person name="Vermeulen M."/>
            <person name="Santamaria A."/>
            <person name="Kumar C."/>
            <person name="Miller M.L."/>
            <person name="Jensen L.J."/>
            <person name="Gnad F."/>
            <person name="Cox J."/>
            <person name="Jensen T.S."/>
            <person name="Nigg E.A."/>
            <person name="Brunak S."/>
            <person name="Mann M."/>
        </authorList>
    </citation>
    <scope>IDENTIFICATION BY MASS SPECTROMETRY [LARGE SCALE ANALYSIS]</scope>
    <source>
        <tissue>Cervix carcinoma</tissue>
    </source>
</reference>
<reference key="13">
    <citation type="journal article" date="2011" name="BMC Syst. Biol.">
        <title>Initial characterization of the human central proteome.</title>
        <authorList>
            <person name="Burkard T.R."/>
            <person name="Planyavsky M."/>
            <person name="Kaupe I."/>
            <person name="Breitwieser F.P."/>
            <person name="Buerckstuemmer T."/>
            <person name="Bennett K.L."/>
            <person name="Superti-Furga G."/>
            <person name="Colinge J."/>
        </authorList>
    </citation>
    <scope>IDENTIFICATION BY MASS SPECTROMETRY [LARGE SCALE ANALYSIS]</scope>
</reference>
<reference key="14">
    <citation type="journal article" date="2012" name="Mol. Cell. Proteomics">
        <title>Protein interaction profiling of the p97 adaptor UBXD1 points to a role for the complex in modulating ERGIC-53 trafficking.</title>
        <authorList>
            <person name="Haines D.S."/>
            <person name="Lee J.E."/>
            <person name="Beauparlant S.L."/>
            <person name="Kyle D.B."/>
            <person name="den Besten W."/>
            <person name="Sweredoski M.J."/>
            <person name="Graham R.L."/>
            <person name="Hess S."/>
            <person name="Deshaies R.J."/>
        </authorList>
    </citation>
    <scope>INTERACTION WITH LMAN1</scope>
</reference>
<reference key="15">
    <citation type="journal article" date="2013" name="J. Proteome Res.">
        <title>Toward a comprehensive characterization of a human cancer cell phosphoproteome.</title>
        <authorList>
            <person name="Zhou H."/>
            <person name="Di Palma S."/>
            <person name="Preisinger C."/>
            <person name="Peng M."/>
            <person name="Polat A.N."/>
            <person name="Heck A.J."/>
            <person name="Mohammed S."/>
        </authorList>
    </citation>
    <scope>PHOSPHORYLATION [LARGE SCALE ANALYSIS] AT SER-379; SER-537; SER-664 AND THR-908</scope>
    <scope>IDENTIFICATION BY MASS SPECTROMETRY [LARGE SCALE ANALYSIS]</scope>
    <source>
        <tissue>Cervix carcinoma</tissue>
        <tissue>Erythroleukemia</tissue>
    </source>
</reference>
<reference key="16">
    <citation type="journal article" date="2014" name="J. Proteomics">
        <title>An enzyme assisted RP-RPLC approach for in-depth analysis of human liver phosphoproteome.</title>
        <authorList>
            <person name="Bian Y."/>
            <person name="Song C."/>
            <person name="Cheng K."/>
            <person name="Dong M."/>
            <person name="Wang F."/>
            <person name="Huang J."/>
            <person name="Sun D."/>
            <person name="Wang L."/>
            <person name="Ye M."/>
            <person name="Zou H."/>
        </authorList>
    </citation>
    <scope>PHOSPHORYLATION [LARGE SCALE ANALYSIS] AT SER-590</scope>
    <scope>IDENTIFICATION BY MASS SPECTROMETRY [LARGE SCALE ANALYSIS]</scope>
    <source>
        <tissue>Liver</tissue>
    </source>
</reference>
<reference key="17">
    <citation type="journal article" date="2015" name="Open Biol.">
        <title>Warburg Micro syndrome is caused by RAB18 deficiency or dysregulation.</title>
        <authorList>
            <person name="Handley M.T."/>
            <person name="Carpanini S.M."/>
            <person name="Mali G.R."/>
            <person name="Sidjanin D.J."/>
            <person name="Aligianis I.A."/>
            <person name="Jackson I.J."/>
            <person name="FitzPatrick D.R."/>
        </authorList>
    </citation>
    <scope>FUNCTION</scope>
    <scope>SUBCELLULAR LOCATION</scope>
</reference>
<reference key="18">
    <citation type="journal article" date="2019" name="Am. J. Med. Genet. A">
        <title>Revealing the functions of novel mutations in RAB3GAP1 in Martsolf and Warburg micro syndromes.</title>
        <authorList>
            <person name="Koparir A."/>
            <person name="Karatas O.F."/>
            <person name="Yilmaz S.S."/>
            <person name="Suer I."/>
            <person name="Ozer B."/>
            <person name="Yuceturk B."/>
            <person name="Ozen M."/>
        </authorList>
    </citation>
    <scope>INVOLVEMENT IN MARTS2 AND WARBM1</scope>
</reference>
<reference key="19">
    <citation type="journal article" date="2013" name="Hum. Mutat.">
        <title>Mutation spectrum in RAB3GAP1, RAB3GAP2, and RAB18 and genotype-phenotype correlations in Warburg micro syndrome and Martsolf syndrome.</title>
        <authorList>
            <person name="Handley M.T."/>
            <person name="Morris-Rosendahl D.J."/>
            <person name="Brown S."/>
            <person name="Macdonald F."/>
            <person name="Hardy C."/>
            <person name="Bem D."/>
            <person name="Carpanini S.M."/>
            <person name="Borck G."/>
            <person name="Martorell L."/>
            <person name="Izzi C."/>
            <person name="Faravelli F."/>
            <person name="Accorsi P."/>
            <person name="Pinelli L."/>
            <person name="Basel-Vanagaite L."/>
            <person name="Peretz G."/>
            <person name="Abdel-Salam G.M."/>
            <person name="Zaki M.S."/>
            <person name="Jansen A."/>
            <person name="Mowat D."/>
            <person name="Glass I."/>
            <person name="Stewart H."/>
            <person name="Mancini G."/>
            <person name="Lederer D."/>
            <person name="Roscioli T."/>
            <person name="Giuliano F."/>
            <person name="Plomp A.S."/>
            <person name="Rolfs A."/>
            <person name="Graham J.M."/>
            <person name="Seemanova E."/>
            <person name="Poo P."/>
            <person name="Garcia-Cazorla A."/>
            <person name="Edery P."/>
            <person name="Jackson I.J."/>
            <person name="Maher E.R."/>
            <person name="Aligianis I.A."/>
        </authorList>
    </citation>
    <scope>VARIANTS WARBM1 PRO-18 AND VAL-24</scope>
    <scope>FUNCTION</scope>
</reference>
<reference key="20">
    <citation type="journal article" date="2014" name="J. Cell Biol.">
        <title>Rab18 and a Rab18 GEF complex are required for normal ER structure.</title>
        <authorList>
            <person name="Gerondopoulos A."/>
            <person name="Bastos R.N."/>
            <person name="Yoshimura S."/>
            <person name="Anderson R."/>
            <person name="Carpanini S."/>
            <person name="Aligianis I."/>
            <person name="Handley M.T."/>
            <person name="Barr F.A."/>
        </authorList>
    </citation>
    <scope>CHARACTERIZATION OF VARIANTS WARBM1 PRO-18 AND VAL-24</scope>
    <scope>FUNCTION</scope>
    <scope>SUBCELLULAR LOCATION</scope>
</reference>
<organism>
    <name type="scientific">Homo sapiens</name>
    <name type="common">Human</name>
    <dbReference type="NCBI Taxonomy" id="9606"/>
    <lineage>
        <taxon>Eukaryota</taxon>
        <taxon>Metazoa</taxon>
        <taxon>Chordata</taxon>
        <taxon>Craniata</taxon>
        <taxon>Vertebrata</taxon>
        <taxon>Euteleostomi</taxon>
        <taxon>Mammalia</taxon>
        <taxon>Eutheria</taxon>
        <taxon>Euarchontoglires</taxon>
        <taxon>Primates</taxon>
        <taxon>Haplorrhini</taxon>
        <taxon>Catarrhini</taxon>
        <taxon>Hominidae</taxon>
        <taxon>Homo</taxon>
    </lineage>
</organism>
<keyword id="KW-0002">3D-structure</keyword>
<keyword id="KW-0025">Alternative splicing</keyword>
<keyword id="KW-0898">Cataract</keyword>
<keyword id="KW-0963">Cytoplasm</keyword>
<keyword id="KW-0225">Disease variant</keyword>
<keyword id="KW-0256">Endoplasmic reticulum</keyword>
<keyword id="KW-0333">Golgi apparatus</keyword>
<keyword id="KW-0343">GTPase activation</keyword>
<keyword id="KW-0991">Intellectual disability</keyword>
<keyword id="KW-0597">Phosphoprotein</keyword>
<keyword id="KW-1267">Proteomics identification</keyword>
<keyword id="KW-1185">Reference proteome</keyword>
<name>RB3GP_HUMAN</name>
<gene>
    <name evidence="16" type="primary">RAB3GAP1</name>
    <name type="synonym">KIAA0066</name>
    <name type="synonym">RAB3GAP</name>
</gene>
<comment type="function">
    <text evidence="4 6 8 9 10 12 13">Catalytic subunit of the Rab3 GTPase-activating (Rab3GAP) complex composed of RAB3GAP1 and RAB3GAP2, which has GTPase-activating protein (GAP) activity towards various Rab3 subfamily members (RAB3A, RAB3B, RAB3C and RAB3D), RAB5A and RAB43, and guanine nucleotide exchange factor (GEF) activity towards RAB18 (PubMed:10859313, PubMed:24891604, PubMed:9030515). As part of the Rab3GAP complex, acts as a GAP for Rab3 proteins by converting active RAB3-GTP to the inactive form RAB3-GDP (PubMed:10859313). Rab3 proteins are involved in regulated exocytosis of neurotransmitters and hormones (PubMed:15696165). The Rab3GAP complex, acts as a GEF for RAB18 by promoting the conversion of inactive RAB18-GDP to the active form RAB18-GTP (PubMed:24891604). Recruits and stabilizes RAB18 at the cis-Golgi membrane in fibroblasts where RAB18 is most likely activated (PubMed:26063829). Also involved in RAB18 recruitment at the endoplasmic reticulum (ER) membrane where it maintains proper ER structure (PubMed:24891604). Required for normal eye and brain development (PubMed:15696165, PubMed:23420520). May participate in neurodevelopmental processes such as proliferation, migration and differentiation before synapse formation, and non-synaptic vesicular release of neurotransmitters (PubMed:9030515, PubMed:9852129).</text>
</comment>
<comment type="biophysicochemical properties">
    <kinetics>
        <KM evidence="4">75 uM for GTP-loaded RAB3A</KM>
    </kinetics>
</comment>
<comment type="subunit">
    <text evidence="1 7">The Rab3 GTPase-activating complex is a heterodimer composed of RAB3GAP1 and RAB3GAP2 (By similarity). The Rab3 GTPase-activating complex interacts with DMXL2 (By similarity). Interacts with LMAN1 (PubMed:22337587).</text>
</comment>
<comment type="subcellular location">
    <subcellularLocation>
        <location evidence="9 13">Cytoplasm</location>
    </subcellularLocation>
    <subcellularLocation>
        <location evidence="9">Endoplasmic reticulum</location>
    </subcellularLocation>
    <subcellularLocation>
        <location evidence="10">Golgi apparatus</location>
        <location evidence="10">cis-Golgi network</location>
    </subcellularLocation>
    <text evidence="10 13">In neurons, enriched in the synaptic soluble fraction. Localized to the cis-Golgi in fibroblasts (PubMed:26063829).</text>
</comment>
<comment type="alternative products">
    <event type="alternative splicing"/>
    <isoform>
        <id>Q15042-1</id>
        <name>1</name>
        <sequence type="displayed"/>
    </isoform>
    <isoform>
        <id>Q15042-3</id>
        <name>2</name>
        <sequence type="described" ref="VSP_054068"/>
    </isoform>
    <isoform>
        <id>Q15042-4</id>
        <name>3</name>
        <sequence type="described" ref="VSP_054475 VSP_054476"/>
    </isoform>
</comment>
<comment type="tissue specificity">
    <text evidence="12">Ubiquitous.</text>
</comment>
<comment type="disease" evidence="6 8 9 11">
    <disease id="DI-02418">
        <name>Warburg micro syndrome 1</name>
        <acronym>WARBM1</acronym>
        <description>A rare, autosomal recessive syndrome characterized by microcephaly, microphthalmia, microcornia, congenital cataracts, optic atrophy, cortical dysplasia, in particular corpus callosum hypoplasia, severe intellectual disability, spastic diplegia, and hypogonadism.</description>
        <dbReference type="MIM" id="600118"/>
    </disease>
    <text>The disease is caused by variants affecting the gene represented in this entry.</text>
</comment>
<comment type="disease" evidence="11">
    <disease id="DI-06162">
        <name>Martsolf syndrome 2</name>
        <acronym>MARTS2</acronym>
        <description>An autosomal recessive disorder characterized by congenital cataracts, mildly to severely impaired intellectual development, and facial dysmorphism. Other features include brain malformations, microcephaly, and hypogonadism-hypogenitalism.</description>
        <dbReference type="MIM" id="619420"/>
    </disease>
    <text>The disease is caused by variants affecting the gene represented in this entry.</text>
</comment>
<comment type="similarity">
    <text evidence="15">Belongs to the Rab3-GAP catalytic subunit family.</text>
</comment>
<comment type="sequence caution" evidence="15">
    <conflict type="frameshift">
        <sequence resource="EMBL" id="BC071602"/>
    </conflict>
</comment>
<comment type="sequence caution" evidence="15">
    <conflict type="miscellaneous discrepancy">
        <sequence resource="EMBL-CDS" id="CAH56411"/>
    </conflict>
    <text>Probable cloning artifact.</text>
</comment>
<sequence length="981" mass="110524">MAADSEPESEVFEITDFTTASEWERFISKVEEVLNDWKLIGNSLGKPLEKGIFTSGTWEEKSDEISFADFKFSVTHHYLVQESTDKEGKDELLEDVVPQSMQDLLGMNNDFPPRAHCLVRWYGLREFVVIAPAAHSDAVLSESKCNLLLSSVSIALGNTGCQVPLFVQIHHKWRRMYVGECQGPGVRTDFEMVHLRKVPNQYTHLSGLLDIFKSKIGCPLTPLPPVSIAIRFTYVLQDWQQYFWPQQPPDIDALVGGEVGGLEFGKLPFGACEDPISELHLATTWPHLTEGIIVDNDVYSDLDPIQAPHWSVRVRKAENPQCLLGDFVTEFFKICRRKESTDEILGRSAFEEEGKETADITHALSKLTEPASVPIHKLSVSNMVHTAKKKIRKHRGVEESPLNNDVLNTILLFLFPDAVSEKPLDGTTSTDNNNPPSESEDYNLYNQFKSAPSDSLTYKLALCLCMINFYHGGLKGVAHLWQEFVLEMRFRWENNFLIPGLASGPPDLRCCLLHQKLQMLNCCIERKKARDEGKKTSASDVTNIYPGDAGKAGDQLVPDNLKETDKEKGEVGKSWDSWSDSEEEFFECLSDTEELKGNGQESGKKGGPKEMANLRPEGRLYQHGKLTLLHNGEPLYIPVTQEPAPMTEDLLEEQSEVLAKLGTSAEGAHLRARMQSACLLSDMESFKAANPGCSLEDFVRWYSPRDYIEEEVIDEKGNVVLKGELSARMKIPSNMWVEAWETAKPIPARRQRRLFDDTREAEKVLHYLAIQKPADLARHLLPCVIHAAVLKVKEEESLENISSVKKIIKQIISHSSKVLHFPNPEDKKLEEIIHQITNVEALIARARSLKAKFGTEKCEQEEEKEDLERFVSCLLEQPEVLVTGAGRGHAGRIIHKLFVNAQRAAAMTPPEEELKRMGSPEERRQNSVSDFPPPAGREFILRTTVPRPAPYSKALPQRMYSVLTKEDFRLAGAFSSDTSFF</sequence>
<dbReference type="EMBL" id="D31886">
    <property type="protein sequence ID" value="BAA06684.1"/>
    <property type="molecule type" value="mRNA"/>
</dbReference>
<dbReference type="EMBL" id="AC017031">
    <property type="status" value="NOT_ANNOTATED_CDS"/>
    <property type="molecule type" value="Genomic_DNA"/>
</dbReference>
<dbReference type="EMBL" id="AC020602">
    <property type="status" value="NOT_ANNOTATED_CDS"/>
    <property type="molecule type" value="Genomic_DNA"/>
</dbReference>
<dbReference type="EMBL" id="BC022977">
    <property type="protein sequence ID" value="AAH22977.1"/>
    <property type="molecule type" value="mRNA"/>
</dbReference>
<dbReference type="EMBL" id="BC071602">
    <property type="status" value="NOT_ANNOTATED_CDS"/>
    <property type="molecule type" value="mRNA"/>
</dbReference>
<dbReference type="EMBL" id="BC146809">
    <property type="protein sequence ID" value="AAI46810.1"/>
    <property type="molecule type" value="mRNA"/>
</dbReference>
<dbReference type="EMBL" id="AL096752">
    <property type="protein sequence ID" value="CAH56411.1"/>
    <property type="status" value="ALT_SEQ"/>
    <property type="molecule type" value="mRNA"/>
</dbReference>
<dbReference type="CCDS" id="CCDS33294.1">
    <molecule id="Q15042-1"/>
</dbReference>
<dbReference type="CCDS" id="CCDS54402.1">
    <molecule id="Q15042-3"/>
</dbReference>
<dbReference type="RefSeq" id="NP_001165906.1">
    <molecule id="Q15042-3"/>
    <property type="nucleotide sequence ID" value="NM_001172435.2"/>
</dbReference>
<dbReference type="RefSeq" id="NP_036365.1">
    <molecule id="Q15042-1"/>
    <property type="nucleotide sequence ID" value="NM_012233.3"/>
</dbReference>
<dbReference type="PDB" id="8VYB">
    <property type="method" value="EM"/>
    <property type="resolution" value="3.37 A"/>
    <property type="chains" value="A=1-974"/>
</dbReference>
<dbReference type="PDBsum" id="8VYB"/>
<dbReference type="EMDB" id="EMD-43645"/>
<dbReference type="EMDB" id="EMD-43655"/>
<dbReference type="SMR" id="Q15042"/>
<dbReference type="BioGRID" id="116590">
    <property type="interactions" value="163"/>
</dbReference>
<dbReference type="FunCoup" id="Q15042">
    <property type="interactions" value="2435"/>
</dbReference>
<dbReference type="IntAct" id="Q15042">
    <property type="interactions" value="68"/>
</dbReference>
<dbReference type="MINT" id="Q15042"/>
<dbReference type="STRING" id="9606.ENSP00000411418"/>
<dbReference type="GlyGen" id="Q15042">
    <property type="glycosylation" value="1 site, 1 O-linked glycan (1 site)"/>
</dbReference>
<dbReference type="iPTMnet" id="Q15042"/>
<dbReference type="PhosphoSitePlus" id="Q15042"/>
<dbReference type="SwissPalm" id="Q15042"/>
<dbReference type="BioMuta" id="RAB3GAP1"/>
<dbReference type="DMDM" id="62511099"/>
<dbReference type="jPOST" id="Q15042"/>
<dbReference type="MassIVE" id="Q15042"/>
<dbReference type="PaxDb" id="9606-ENSP00000411418"/>
<dbReference type="PeptideAtlas" id="Q15042"/>
<dbReference type="ProteomicsDB" id="60390">
    <molecule id="Q15042-1"/>
</dbReference>
<dbReference type="ProteomicsDB" id="789"/>
<dbReference type="ProteomicsDB" id="8989"/>
<dbReference type="Pumba" id="Q15042"/>
<dbReference type="Antibodypedia" id="33565">
    <property type="antibodies" value="175 antibodies from 29 providers"/>
</dbReference>
<dbReference type="DNASU" id="22930"/>
<dbReference type="Ensembl" id="ENST00000264158.13">
    <molecule id="Q15042-1"/>
    <property type="protein sequence ID" value="ENSP00000264158.8"/>
    <property type="gene ID" value="ENSG00000115839.20"/>
</dbReference>
<dbReference type="Ensembl" id="ENST00000442034.5">
    <molecule id="Q15042-3"/>
    <property type="protein sequence ID" value="ENSP00000411418.1"/>
    <property type="gene ID" value="ENSG00000115839.20"/>
</dbReference>
<dbReference type="GeneID" id="22930"/>
<dbReference type="KEGG" id="hsa:22930"/>
<dbReference type="MANE-Select" id="ENST00000264158.13">
    <property type="protein sequence ID" value="ENSP00000264158.8"/>
    <property type="RefSeq nucleotide sequence ID" value="NM_012233.3"/>
    <property type="RefSeq protein sequence ID" value="NP_036365.1"/>
</dbReference>
<dbReference type="UCSC" id="uc002tuj.4">
    <molecule id="Q15042-1"/>
    <property type="organism name" value="human"/>
</dbReference>
<dbReference type="AGR" id="HGNC:17063"/>
<dbReference type="CTD" id="22930"/>
<dbReference type="DisGeNET" id="22930"/>
<dbReference type="GeneCards" id="RAB3GAP1"/>
<dbReference type="GeneReviews" id="RAB3GAP1"/>
<dbReference type="HGNC" id="HGNC:17063">
    <property type="gene designation" value="RAB3GAP1"/>
</dbReference>
<dbReference type="HPA" id="ENSG00000115839">
    <property type="expression patterns" value="Low tissue specificity"/>
</dbReference>
<dbReference type="MalaCards" id="RAB3GAP1"/>
<dbReference type="MIM" id="600118">
    <property type="type" value="phenotype"/>
</dbReference>
<dbReference type="MIM" id="602536">
    <property type="type" value="gene"/>
</dbReference>
<dbReference type="MIM" id="619420">
    <property type="type" value="phenotype"/>
</dbReference>
<dbReference type="neXtProt" id="NX_Q15042"/>
<dbReference type="OpenTargets" id="ENSG00000115839"/>
<dbReference type="Orphanet" id="1387">
    <property type="disease" value="Cataract-intellectual disability-hypogonadism syndrome"/>
</dbReference>
<dbReference type="Orphanet" id="2510">
    <property type="disease" value="Micro syndrome"/>
</dbReference>
<dbReference type="PharmGKB" id="PA134969639"/>
<dbReference type="VEuPathDB" id="HostDB:ENSG00000115839"/>
<dbReference type="eggNOG" id="KOG2390">
    <property type="taxonomic scope" value="Eukaryota"/>
</dbReference>
<dbReference type="GeneTree" id="ENSGT00390000006705"/>
<dbReference type="HOGENOM" id="CLU_012561_1_0_1"/>
<dbReference type="InParanoid" id="Q15042"/>
<dbReference type="OMA" id="KYAKHRR"/>
<dbReference type="OrthoDB" id="17346at2759"/>
<dbReference type="PAN-GO" id="Q15042">
    <property type="GO annotations" value="2 GO annotations based on evolutionary models"/>
</dbReference>
<dbReference type="PhylomeDB" id="Q15042"/>
<dbReference type="TreeFam" id="TF314500"/>
<dbReference type="PathwayCommons" id="Q15042"/>
<dbReference type="Reactome" id="R-HSA-6811436">
    <property type="pathway name" value="COPI-independent Golgi-to-ER retrograde traffic"/>
</dbReference>
<dbReference type="Reactome" id="R-HSA-8876198">
    <property type="pathway name" value="RAB GEFs exchange GTP for GDP on RABs"/>
</dbReference>
<dbReference type="SABIO-RK" id="Q15042"/>
<dbReference type="SignaLink" id="Q15042"/>
<dbReference type="SIGNOR" id="Q15042"/>
<dbReference type="BioGRID-ORCS" id="22930">
    <property type="hits" value="22 hits in 1159 CRISPR screens"/>
</dbReference>
<dbReference type="CD-CODE" id="FB4E32DD">
    <property type="entry name" value="Presynaptic clusters and postsynaptic densities"/>
</dbReference>
<dbReference type="ChiTaRS" id="RAB3GAP1">
    <property type="organism name" value="human"/>
</dbReference>
<dbReference type="GeneWiki" id="RAB3GAP1"/>
<dbReference type="GenomeRNAi" id="22930"/>
<dbReference type="Pharos" id="Q15042">
    <property type="development level" value="Tbio"/>
</dbReference>
<dbReference type="PRO" id="PR:Q15042"/>
<dbReference type="Proteomes" id="UP000005640">
    <property type="component" value="Chromosome 2"/>
</dbReference>
<dbReference type="RNAct" id="Q15042">
    <property type="molecule type" value="protein"/>
</dbReference>
<dbReference type="Bgee" id="ENSG00000115839">
    <property type="expression patterns" value="Expressed in hair follicle and 216 other cell types or tissues"/>
</dbReference>
<dbReference type="ExpressionAtlas" id="Q15042">
    <property type="expression patterns" value="baseline and differential"/>
</dbReference>
<dbReference type="GO" id="GO:0005801">
    <property type="term" value="C:cis-Golgi network"/>
    <property type="evidence" value="ECO:0000314"/>
    <property type="project" value="UniProtKB"/>
</dbReference>
<dbReference type="GO" id="GO:0005829">
    <property type="term" value="C:cytosol"/>
    <property type="evidence" value="ECO:0000304"/>
    <property type="project" value="Reactome"/>
</dbReference>
<dbReference type="GO" id="GO:0005789">
    <property type="term" value="C:endoplasmic reticulum membrane"/>
    <property type="evidence" value="ECO:0000304"/>
    <property type="project" value="Reactome"/>
</dbReference>
<dbReference type="GO" id="GO:0071782">
    <property type="term" value="C:endoplasmic reticulum tubular network"/>
    <property type="evidence" value="ECO:0000314"/>
    <property type="project" value="UniProtKB"/>
</dbReference>
<dbReference type="GO" id="GO:0070062">
    <property type="term" value="C:extracellular exosome"/>
    <property type="evidence" value="ECO:0007005"/>
    <property type="project" value="UniProtKB"/>
</dbReference>
<dbReference type="GO" id="GO:0005794">
    <property type="term" value="C:Golgi apparatus"/>
    <property type="evidence" value="ECO:0000314"/>
    <property type="project" value="GO_Central"/>
</dbReference>
<dbReference type="GO" id="GO:0005811">
    <property type="term" value="C:lipid droplet"/>
    <property type="evidence" value="ECO:0000314"/>
    <property type="project" value="GO_Central"/>
</dbReference>
<dbReference type="GO" id="GO:0098794">
    <property type="term" value="C:postsynapse"/>
    <property type="evidence" value="ECO:0007669"/>
    <property type="project" value="GOC"/>
</dbReference>
<dbReference type="GO" id="GO:0032991">
    <property type="term" value="C:protein-containing complex"/>
    <property type="evidence" value="ECO:0000314"/>
    <property type="project" value="UniProtKB"/>
</dbReference>
<dbReference type="GO" id="GO:0005096">
    <property type="term" value="F:GTPase activator activity"/>
    <property type="evidence" value="ECO:0000314"/>
    <property type="project" value="UniProtKB"/>
</dbReference>
<dbReference type="GO" id="GO:0005085">
    <property type="term" value="F:guanyl-nucleotide exchange factor activity"/>
    <property type="evidence" value="ECO:0000314"/>
    <property type="project" value="UniProtKB"/>
</dbReference>
<dbReference type="GO" id="GO:0031267">
    <property type="term" value="F:small GTPase binding"/>
    <property type="evidence" value="ECO:0000353"/>
    <property type="project" value="UniProtKB"/>
</dbReference>
<dbReference type="GO" id="GO:0007420">
    <property type="term" value="P:brain development"/>
    <property type="evidence" value="ECO:0000315"/>
    <property type="project" value="BHF-UCL"/>
</dbReference>
<dbReference type="GO" id="GO:0043010">
    <property type="term" value="P:camera-type eye development"/>
    <property type="evidence" value="ECO:0000315"/>
    <property type="project" value="BHF-UCL"/>
</dbReference>
<dbReference type="GO" id="GO:0097051">
    <property type="term" value="P:establishment of protein localization to endoplasmic reticulum membrane"/>
    <property type="evidence" value="ECO:0000315"/>
    <property type="project" value="UniProtKB"/>
</dbReference>
<dbReference type="GO" id="GO:0060079">
    <property type="term" value="P:excitatory postsynaptic potential"/>
    <property type="evidence" value="ECO:0000250"/>
    <property type="project" value="ParkinsonsUK-UCL"/>
</dbReference>
<dbReference type="GO" id="GO:0060325">
    <property type="term" value="P:face morphogenesis"/>
    <property type="evidence" value="ECO:0000315"/>
    <property type="project" value="BHF-UCL"/>
</dbReference>
<dbReference type="GO" id="GO:0021854">
    <property type="term" value="P:hypothalamus development"/>
    <property type="evidence" value="ECO:0000315"/>
    <property type="project" value="BHF-UCL"/>
</dbReference>
<dbReference type="GO" id="GO:0034389">
    <property type="term" value="P:lipid droplet organization"/>
    <property type="evidence" value="ECO:0000315"/>
    <property type="project" value="MGI"/>
</dbReference>
<dbReference type="GO" id="GO:2000786">
    <property type="term" value="P:positive regulation of autophagosome assembly"/>
    <property type="evidence" value="ECO:0000315"/>
    <property type="project" value="GO_Central"/>
</dbReference>
<dbReference type="GO" id="GO:1903373">
    <property type="term" value="P:positive regulation of endoplasmic reticulum tubular network organization"/>
    <property type="evidence" value="ECO:0000315"/>
    <property type="project" value="UniProtKB"/>
</dbReference>
<dbReference type="GO" id="GO:0061646">
    <property type="term" value="P:positive regulation of glutamate neurotransmitter secretion in response to membrane depolarization"/>
    <property type="evidence" value="ECO:0000250"/>
    <property type="project" value="ParkinsonsUK-UCL"/>
</dbReference>
<dbReference type="GO" id="GO:0043547">
    <property type="term" value="P:positive regulation of GTPase activity"/>
    <property type="evidence" value="ECO:0000315"/>
    <property type="project" value="UniProtKB"/>
</dbReference>
<dbReference type="GO" id="GO:1903061">
    <property type="term" value="P:positive regulation of protein lipidation"/>
    <property type="evidence" value="ECO:0000315"/>
    <property type="project" value="GO_Central"/>
</dbReference>
<dbReference type="GO" id="GO:1903233">
    <property type="term" value="P:regulation of calcium ion-dependent exocytosis of neurotransmitter"/>
    <property type="evidence" value="ECO:0000250"/>
    <property type="project" value="ParkinsonsUK-UCL"/>
</dbReference>
<dbReference type="GO" id="GO:0043087">
    <property type="term" value="P:regulation of GTPase activity"/>
    <property type="evidence" value="ECO:0000314"/>
    <property type="project" value="UniProtKB"/>
</dbReference>
<dbReference type="GO" id="GO:0048172">
    <property type="term" value="P:regulation of short-term neuronal synaptic plasticity"/>
    <property type="evidence" value="ECO:0000250"/>
    <property type="project" value="ParkinsonsUK-UCL"/>
</dbReference>
<dbReference type="InterPro" id="IPR045700">
    <property type="entry name" value="Rab3GAP1"/>
</dbReference>
<dbReference type="InterPro" id="IPR045698">
    <property type="entry name" value="Rab3GAP1_C"/>
</dbReference>
<dbReference type="InterPro" id="IPR026147">
    <property type="entry name" value="Rab3GAP1_conserved"/>
</dbReference>
<dbReference type="PANTHER" id="PTHR21422">
    <property type="entry name" value="RAB3 GTPASE-ACTIVATING PROTEIN CATALYTIC SUBUNIT"/>
    <property type="match status" value="1"/>
</dbReference>
<dbReference type="PANTHER" id="PTHR21422:SF9">
    <property type="entry name" value="RAB3 GTPASE-ACTIVATING PROTEIN CATALYTIC SUBUNIT"/>
    <property type="match status" value="1"/>
</dbReference>
<dbReference type="Pfam" id="PF19533">
    <property type="entry name" value="Rab3-GAP_cat_C"/>
    <property type="match status" value="1"/>
</dbReference>
<dbReference type="Pfam" id="PF13890">
    <property type="entry name" value="Rab3-GTPase_cat"/>
    <property type="match status" value="1"/>
</dbReference>